<comment type="function">
    <text evidence="2">One of the essential components for the initiation of protein synthesis. Protects formylmethionyl-tRNA from spontaneous hydrolysis and promotes its binding to the 30S ribosomal subunits. Also involved in the hydrolysis of GTP during the formation of the 70S ribosomal complex.</text>
</comment>
<comment type="subcellular location">
    <subcellularLocation>
        <location evidence="2">Cytoplasm</location>
    </subcellularLocation>
</comment>
<comment type="similarity">
    <text evidence="2">Belongs to the TRAFAC class translation factor GTPase superfamily. Classic translation factor GTPase family. IF-2 subfamily.</text>
</comment>
<dbReference type="EMBL" id="CP000425">
    <property type="protein sequence ID" value="ABJ72370.1"/>
    <property type="molecule type" value="Genomic_DNA"/>
</dbReference>
<dbReference type="RefSeq" id="WP_011675737.1">
    <property type="nucleotide sequence ID" value="NC_008527.1"/>
</dbReference>
<dbReference type="SMR" id="Q030K2"/>
<dbReference type="KEGG" id="llc:LACR_0817"/>
<dbReference type="HOGENOM" id="CLU_006301_5_0_9"/>
<dbReference type="Proteomes" id="UP000000240">
    <property type="component" value="Chromosome"/>
</dbReference>
<dbReference type="GO" id="GO:0005829">
    <property type="term" value="C:cytosol"/>
    <property type="evidence" value="ECO:0007669"/>
    <property type="project" value="TreeGrafter"/>
</dbReference>
<dbReference type="GO" id="GO:0005525">
    <property type="term" value="F:GTP binding"/>
    <property type="evidence" value="ECO:0007669"/>
    <property type="project" value="UniProtKB-KW"/>
</dbReference>
<dbReference type="GO" id="GO:0003924">
    <property type="term" value="F:GTPase activity"/>
    <property type="evidence" value="ECO:0007669"/>
    <property type="project" value="UniProtKB-UniRule"/>
</dbReference>
<dbReference type="GO" id="GO:0003743">
    <property type="term" value="F:translation initiation factor activity"/>
    <property type="evidence" value="ECO:0007669"/>
    <property type="project" value="UniProtKB-UniRule"/>
</dbReference>
<dbReference type="CDD" id="cd01887">
    <property type="entry name" value="IF2_eIF5B"/>
    <property type="match status" value="1"/>
</dbReference>
<dbReference type="CDD" id="cd03702">
    <property type="entry name" value="IF2_mtIF2_II"/>
    <property type="match status" value="1"/>
</dbReference>
<dbReference type="CDD" id="cd03692">
    <property type="entry name" value="mtIF2_IVc"/>
    <property type="match status" value="1"/>
</dbReference>
<dbReference type="FunFam" id="2.40.30.10:FF:000007">
    <property type="entry name" value="Translation initiation factor IF-2"/>
    <property type="match status" value="1"/>
</dbReference>
<dbReference type="FunFam" id="2.40.30.10:FF:000008">
    <property type="entry name" value="Translation initiation factor IF-2"/>
    <property type="match status" value="1"/>
</dbReference>
<dbReference type="FunFam" id="3.40.50.10050:FF:000001">
    <property type="entry name" value="Translation initiation factor IF-2"/>
    <property type="match status" value="1"/>
</dbReference>
<dbReference type="FunFam" id="3.40.50.300:FF:000019">
    <property type="entry name" value="Translation initiation factor IF-2"/>
    <property type="match status" value="1"/>
</dbReference>
<dbReference type="Gene3D" id="1.10.10.2480">
    <property type="match status" value="1"/>
</dbReference>
<dbReference type="Gene3D" id="3.40.50.300">
    <property type="entry name" value="P-loop containing nucleotide triphosphate hydrolases"/>
    <property type="match status" value="1"/>
</dbReference>
<dbReference type="Gene3D" id="2.40.30.10">
    <property type="entry name" value="Translation factors"/>
    <property type="match status" value="2"/>
</dbReference>
<dbReference type="Gene3D" id="3.40.50.10050">
    <property type="entry name" value="Translation initiation factor IF- 2, domain 3"/>
    <property type="match status" value="1"/>
</dbReference>
<dbReference type="HAMAP" id="MF_00100_B">
    <property type="entry name" value="IF_2_B"/>
    <property type="match status" value="1"/>
</dbReference>
<dbReference type="InterPro" id="IPR053905">
    <property type="entry name" value="EF-G-like_DII"/>
</dbReference>
<dbReference type="InterPro" id="IPR044145">
    <property type="entry name" value="IF2_II"/>
</dbReference>
<dbReference type="InterPro" id="IPR006847">
    <property type="entry name" value="IF2_N"/>
</dbReference>
<dbReference type="InterPro" id="IPR027417">
    <property type="entry name" value="P-loop_NTPase"/>
</dbReference>
<dbReference type="InterPro" id="IPR005225">
    <property type="entry name" value="Small_GTP-bd"/>
</dbReference>
<dbReference type="InterPro" id="IPR000795">
    <property type="entry name" value="T_Tr_GTP-bd_dom"/>
</dbReference>
<dbReference type="InterPro" id="IPR000178">
    <property type="entry name" value="TF_IF2_bacterial-like"/>
</dbReference>
<dbReference type="InterPro" id="IPR015760">
    <property type="entry name" value="TIF_IF2"/>
</dbReference>
<dbReference type="InterPro" id="IPR023115">
    <property type="entry name" value="TIF_IF2_dom3"/>
</dbReference>
<dbReference type="InterPro" id="IPR036925">
    <property type="entry name" value="TIF_IF2_dom3_sf"/>
</dbReference>
<dbReference type="InterPro" id="IPR009000">
    <property type="entry name" value="Transl_B-barrel_sf"/>
</dbReference>
<dbReference type="NCBIfam" id="TIGR00487">
    <property type="entry name" value="IF-2"/>
    <property type="match status" value="1"/>
</dbReference>
<dbReference type="NCBIfam" id="TIGR00231">
    <property type="entry name" value="small_GTP"/>
    <property type="match status" value="1"/>
</dbReference>
<dbReference type="PANTHER" id="PTHR43381:SF5">
    <property type="entry name" value="TR-TYPE G DOMAIN-CONTAINING PROTEIN"/>
    <property type="match status" value="1"/>
</dbReference>
<dbReference type="PANTHER" id="PTHR43381">
    <property type="entry name" value="TRANSLATION INITIATION FACTOR IF-2-RELATED"/>
    <property type="match status" value="1"/>
</dbReference>
<dbReference type="Pfam" id="PF22042">
    <property type="entry name" value="EF-G_D2"/>
    <property type="match status" value="1"/>
</dbReference>
<dbReference type="Pfam" id="PF00009">
    <property type="entry name" value="GTP_EFTU"/>
    <property type="match status" value="1"/>
</dbReference>
<dbReference type="Pfam" id="PF11987">
    <property type="entry name" value="IF-2"/>
    <property type="match status" value="1"/>
</dbReference>
<dbReference type="Pfam" id="PF04760">
    <property type="entry name" value="IF2_N"/>
    <property type="match status" value="2"/>
</dbReference>
<dbReference type="PRINTS" id="PR00449">
    <property type="entry name" value="RASTRNSFRMNG"/>
</dbReference>
<dbReference type="SUPFAM" id="SSF52156">
    <property type="entry name" value="Initiation factor IF2/eIF5b, domain 3"/>
    <property type="match status" value="1"/>
</dbReference>
<dbReference type="SUPFAM" id="SSF52540">
    <property type="entry name" value="P-loop containing nucleoside triphosphate hydrolases"/>
    <property type="match status" value="1"/>
</dbReference>
<dbReference type="SUPFAM" id="SSF50447">
    <property type="entry name" value="Translation proteins"/>
    <property type="match status" value="2"/>
</dbReference>
<dbReference type="PROSITE" id="PS51722">
    <property type="entry name" value="G_TR_2"/>
    <property type="match status" value="1"/>
</dbReference>
<dbReference type="PROSITE" id="PS01176">
    <property type="entry name" value="IF2"/>
    <property type="match status" value="1"/>
</dbReference>
<sequence>MSDKKRINQIAKETGLSNTELVATAQSLGFEVKSHSRSVTAEQAEKIIQGVKTGTDTIVKPAEKTVKAKTKTVPETAKSKQEDHPRTFAGKAVVEDPAILARIKEKEEAKKAAKTEAEPIEEVITTEKPKVAEPVKKSEPKAAAKAEETKVEKVEAKAKTVTPKAEVKTENVADKKEPVVTEEKKKSLTQKPRIQIKVIKRAEDIKKEQAAARPEKKKFDKNRNDRNNRNDNRRPNQNGNGQGHSQGGNHYDKNRPAGQGQNQGQKRDKFASSGSSSTSDTFTPAASGKNNRRDRDRKKTDSNRDNTKDGNRKGGPLRVNDNRNQVRNARNSNWNQKGGRGRYQNNQSSNVPATQRKFHELPESLEYEVGMNVQDIAKSIKREPAEIIKKLFMMGTMVNQNQSLDEDTIELILMDYGVTPLKKVEEDKSDIERLFVEDGYLNEDKMVERPAVVTIMGHVDHGKTTLLDRFRESRVTEGEAGGITQHIGAYQIKTNGKKITFLDTPGHEAFTSMRARGASVTDITILVVAADDGVMPQTIEAINHSKAAGVPIIVAINKIDKPGANPQRVTQELTEHGVFPVAWDPENGSEFVEISAKFNQNLEELLDTVLLVAEVQELKADPSVRAIGTVVEARLDQGKGAIATLLVQQGTLHIQDPIVVGNTYGRVRTMTNDLGRRIKEAGPSTPIELTGLSDVPQAGDHFAVFEDEKAARAAGEERAKRAQLIKRQNTRRVNLDNLFDTLKEGQTKSVNIIIKADVQGSAEALAASLQKIEVEGVKVDIVHSAVGAISESDISLAAASNAIIIGFNVRPTGLAREQAAQEEVDIRLHSIIYKVIEEVETAMRGMLDPEFKEEIIGEAIVRETFNVSKVGTIAGFMVIRGKVTRDASVRVIREGVVIHDGAIASLKHFKDDVKEVGNAQEGGLMVEDFNDVEIDDTFEVYKMVEIERKK</sequence>
<evidence type="ECO:0000250" key="1"/>
<evidence type="ECO:0000255" key="2">
    <source>
        <dbReference type="HAMAP-Rule" id="MF_00100"/>
    </source>
</evidence>
<evidence type="ECO:0000256" key="3">
    <source>
        <dbReference type="SAM" id="MobiDB-lite"/>
    </source>
</evidence>
<protein>
    <recommendedName>
        <fullName evidence="2">Translation initiation factor IF-2</fullName>
    </recommendedName>
</protein>
<proteinExistence type="inferred from homology"/>
<accession>Q030K2</accession>
<gene>
    <name evidence="2" type="primary">infB</name>
    <name type="ordered locus">LACR_0817</name>
</gene>
<keyword id="KW-0963">Cytoplasm</keyword>
<keyword id="KW-0342">GTP-binding</keyword>
<keyword id="KW-0396">Initiation factor</keyword>
<keyword id="KW-0547">Nucleotide-binding</keyword>
<keyword id="KW-0648">Protein biosynthesis</keyword>
<name>IF2_LACLS</name>
<feature type="chain" id="PRO_0000335483" description="Translation initiation factor IF-2">
    <location>
        <begin position="1"/>
        <end position="950"/>
    </location>
</feature>
<feature type="domain" description="tr-type G">
    <location>
        <begin position="448"/>
        <end position="619"/>
    </location>
</feature>
<feature type="region of interest" description="Disordered" evidence="3">
    <location>
        <begin position="69"/>
        <end position="92"/>
    </location>
</feature>
<feature type="region of interest" description="Disordered" evidence="3">
    <location>
        <begin position="128"/>
        <end position="352"/>
    </location>
</feature>
<feature type="region of interest" description="G1" evidence="1">
    <location>
        <begin position="457"/>
        <end position="464"/>
    </location>
</feature>
<feature type="region of interest" description="G2" evidence="1">
    <location>
        <begin position="482"/>
        <end position="486"/>
    </location>
</feature>
<feature type="region of interest" description="G3" evidence="1">
    <location>
        <begin position="503"/>
        <end position="506"/>
    </location>
</feature>
<feature type="region of interest" description="G4" evidence="1">
    <location>
        <begin position="557"/>
        <end position="560"/>
    </location>
</feature>
<feature type="region of interest" description="G5" evidence="1">
    <location>
        <begin position="595"/>
        <end position="597"/>
    </location>
</feature>
<feature type="compositionally biased region" description="Basic and acidic residues" evidence="3">
    <location>
        <begin position="77"/>
        <end position="86"/>
    </location>
</feature>
<feature type="compositionally biased region" description="Basic and acidic residues" evidence="3">
    <location>
        <begin position="128"/>
        <end position="158"/>
    </location>
</feature>
<feature type="compositionally biased region" description="Basic and acidic residues" evidence="3">
    <location>
        <begin position="165"/>
        <end position="186"/>
    </location>
</feature>
<feature type="compositionally biased region" description="Basic and acidic residues" evidence="3">
    <location>
        <begin position="200"/>
        <end position="234"/>
    </location>
</feature>
<feature type="compositionally biased region" description="Basic and acidic residues" evidence="3">
    <location>
        <begin position="291"/>
        <end position="312"/>
    </location>
</feature>
<feature type="compositionally biased region" description="Polar residues" evidence="3">
    <location>
        <begin position="322"/>
        <end position="336"/>
    </location>
</feature>
<feature type="compositionally biased region" description="Polar residues" evidence="3">
    <location>
        <begin position="343"/>
        <end position="352"/>
    </location>
</feature>
<feature type="binding site" evidence="2">
    <location>
        <begin position="457"/>
        <end position="464"/>
    </location>
    <ligand>
        <name>GTP</name>
        <dbReference type="ChEBI" id="CHEBI:37565"/>
    </ligand>
</feature>
<feature type="binding site" evidence="2">
    <location>
        <begin position="503"/>
        <end position="507"/>
    </location>
    <ligand>
        <name>GTP</name>
        <dbReference type="ChEBI" id="CHEBI:37565"/>
    </ligand>
</feature>
<feature type="binding site" evidence="2">
    <location>
        <begin position="557"/>
        <end position="560"/>
    </location>
    <ligand>
        <name>GTP</name>
        <dbReference type="ChEBI" id="CHEBI:37565"/>
    </ligand>
</feature>
<reference key="1">
    <citation type="journal article" date="2006" name="Proc. Natl. Acad. Sci. U.S.A.">
        <title>Comparative genomics of the lactic acid bacteria.</title>
        <authorList>
            <person name="Makarova K.S."/>
            <person name="Slesarev A."/>
            <person name="Wolf Y.I."/>
            <person name="Sorokin A."/>
            <person name="Mirkin B."/>
            <person name="Koonin E.V."/>
            <person name="Pavlov A."/>
            <person name="Pavlova N."/>
            <person name="Karamychev V."/>
            <person name="Polouchine N."/>
            <person name="Shakhova V."/>
            <person name="Grigoriev I."/>
            <person name="Lou Y."/>
            <person name="Rohksar D."/>
            <person name="Lucas S."/>
            <person name="Huang K."/>
            <person name="Goodstein D.M."/>
            <person name="Hawkins T."/>
            <person name="Plengvidhya V."/>
            <person name="Welker D."/>
            <person name="Hughes J."/>
            <person name="Goh Y."/>
            <person name="Benson A."/>
            <person name="Baldwin K."/>
            <person name="Lee J.-H."/>
            <person name="Diaz-Muniz I."/>
            <person name="Dosti B."/>
            <person name="Smeianov V."/>
            <person name="Wechter W."/>
            <person name="Barabote R."/>
            <person name="Lorca G."/>
            <person name="Altermann E."/>
            <person name="Barrangou R."/>
            <person name="Ganesan B."/>
            <person name="Xie Y."/>
            <person name="Rawsthorne H."/>
            <person name="Tamir D."/>
            <person name="Parker C."/>
            <person name="Breidt F."/>
            <person name="Broadbent J.R."/>
            <person name="Hutkins R."/>
            <person name="O'Sullivan D."/>
            <person name="Steele J."/>
            <person name="Unlu G."/>
            <person name="Saier M.H. Jr."/>
            <person name="Klaenhammer T."/>
            <person name="Richardson P."/>
            <person name="Kozyavkin S."/>
            <person name="Weimer B.C."/>
            <person name="Mills D.A."/>
        </authorList>
    </citation>
    <scope>NUCLEOTIDE SEQUENCE [LARGE SCALE GENOMIC DNA]</scope>
    <source>
        <strain>SK11</strain>
    </source>
</reference>
<organism>
    <name type="scientific">Lactococcus lactis subsp. cremoris (strain SK11)</name>
    <dbReference type="NCBI Taxonomy" id="272622"/>
    <lineage>
        <taxon>Bacteria</taxon>
        <taxon>Bacillati</taxon>
        <taxon>Bacillota</taxon>
        <taxon>Bacilli</taxon>
        <taxon>Lactobacillales</taxon>
        <taxon>Streptococcaceae</taxon>
        <taxon>Lactococcus</taxon>
        <taxon>Lactococcus cremoris subsp. cremoris</taxon>
    </lineage>
</organism>